<proteinExistence type="evidence at protein level"/>
<gene>
    <name evidence="1 4" type="primary">Fcmr</name>
    <name type="synonym">Faim3</name>
    <name type="synonym">Toso</name>
</gene>
<evidence type="ECO:0000250" key="1">
    <source>
        <dbReference type="UniProtKB" id="O60667"/>
    </source>
</evidence>
<evidence type="ECO:0000255" key="2"/>
<evidence type="ECO:0000256" key="3">
    <source>
        <dbReference type="SAM" id="MobiDB-lite"/>
    </source>
</evidence>
<evidence type="ECO:0000312" key="4">
    <source>
        <dbReference type="RGD" id="1359282"/>
    </source>
</evidence>
<evidence type="ECO:0007744" key="5">
    <source>
    </source>
</evidence>
<name>FCMR_RAT</name>
<protein>
    <recommendedName>
        <fullName evidence="1">Immunoglobulin mu Fc receptor</fullName>
        <shortName evidence="1">IgM FcR</shortName>
    </recommendedName>
    <alternativeName>
        <fullName evidence="1">Fas apoptotic inhibitory molecule 3</fullName>
        <shortName evidence="1">FAIM3g</shortName>
    </alternativeName>
    <alternativeName>
        <fullName evidence="1">Regulator of Fas-induced apoptosis Toso</fullName>
    </alternativeName>
</protein>
<organism>
    <name type="scientific">Rattus norvegicus</name>
    <name type="common">Rat</name>
    <dbReference type="NCBI Taxonomy" id="10116"/>
    <lineage>
        <taxon>Eukaryota</taxon>
        <taxon>Metazoa</taxon>
        <taxon>Chordata</taxon>
        <taxon>Craniata</taxon>
        <taxon>Vertebrata</taxon>
        <taxon>Euteleostomi</taxon>
        <taxon>Mammalia</taxon>
        <taxon>Eutheria</taxon>
        <taxon>Euarchontoglires</taxon>
        <taxon>Glires</taxon>
        <taxon>Rodentia</taxon>
        <taxon>Myomorpha</taxon>
        <taxon>Muroidea</taxon>
        <taxon>Muridae</taxon>
        <taxon>Murinae</taxon>
        <taxon>Rattus</taxon>
    </lineage>
</organism>
<feature type="signal peptide" evidence="2">
    <location>
        <begin position="1"/>
        <end position="16"/>
    </location>
</feature>
<feature type="chain" id="PRO_0000284423" description="Immunoglobulin mu Fc receptor">
    <location>
        <begin position="17"/>
        <end position="426"/>
    </location>
</feature>
<feature type="transmembrane region" description="Helical" evidence="2">
    <location>
        <begin position="267"/>
        <end position="287"/>
    </location>
</feature>
<feature type="domain" description="Ig-like" evidence="2">
    <location>
        <begin position="24"/>
        <end position="121"/>
    </location>
</feature>
<feature type="region of interest" description="Disordered" evidence="3">
    <location>
        <begin position="178"/>
        <end position="212"/>
    </location>
</feature>
<feature type="region of interest" description="Disordered" evidence="3">
    <location>
        <begin position="306"/>
        <end position="346"/>
    </location>
</feature>
<feature type="region of interest" description="Disordered" evidence="3">
    <location>
        <begin position="401"/>
        <end position="426"/>
    </location>
</feature>
<feature type="compositionally biased region" description="Pro residues" evidence="3">
    <location>
        <begin position="415"/>
        <end position="426"/>
    </location>
</feature>
<feature type="site" description="Receptor capping" evidence="1">
    <location>
        <position position="268"/>
    </location>
</feature>
<feature type="site" description="Receptor-mediated endocytosis" evidence="1">
    <location>
        <position position="386"/>
    </location>
</feature>
<feature type="site" description="Receptor-mediated endocytosis" evidence="1">
    <location>
        <position position="405"/>
    </location>
</feature>
<feature type="modified residue" description="Phosphothreonine" evidence="5">
    <location>
        <position position="91"/>
    </location>
</feature>
<feature type="disulfide bond" evidence="1">
    <location>
        <begin position="37"/>
        <end position="103"/>
    </location>
</feature>
<feature type="disulfide bond" evidence="1">
    <location>
        <begin position="49"/>
        <end position="58"/>
    </location>
</feature>
<keyword id="KW-1003">Cell membrane</keyword>
<keyword id="KW-1015">Disulfide bond</keyword>
<keyword id="KW-0967">Endosome</keyword>
<keyword id="KW-0333">Golgi apparatus</keyword>
<keyword id="KW-0391">Immunity</keyword>
<keyword id="KW-0393">Immunoglobulin domain</keyword>
<keyword id="KW-0458">Lysosome</keyword>
<keyword id="KW-0472">Membrane</keyword>
<keyword id="KW-0597">Phosphoprotein</keyword>
<keyword id="KW-0675">Receptor</keyword>
<keyword id="KW-1185">Reference proteome</keyword>
<keyword id="KW-0732">Signal</keyword>
<keyword id="KW-0812">Transmembrane</keyword>
<keyword id="KW-1133">Transmembrane helix</keyword>
<accession>Q5M871</accession>
<reference key="1">
    <citation type="journal article" date="2004" name="Genome Res.">
        <title>The status, quality, and expansion of the NIH full-length cDNA project: the Mammalian Gene Collection (MGC).</title>
        <authorList>
            <consortium name="The MGC Project Team"/>
        </authorList>
    </citation>
    <scope>NUCLEOTIDE SEQUENCE [LARGE SCALE MRNA]</scope>
    <source>
        <tissue>Spleen</tissue>
    </source>
</reference>
<reference key="2">
    <citation type="journal article" date="2006" name="Proc. Natl. Acad. Sci. U.S.A.">
        <title>Quantitative phosphoproteomics of vasopressin-sensitive renal cells: regulation of aquaporin-2 phosphorylation at two sites.</title>
        <authorList>
            <person name="Hoffert J.D."/>
            <person name="Pisitkun T."/>
            <person name="Wang G."/>
            <person name="Shen R.-F."/>
            <person name="Knepper M.A."/>
        </authorList>
    </citation>
    <scope>PHOSPHORYLATION [LARGE SCALE ANALYSIS] AT THR-91</scope>
    <scope>IDENTIFICATION BY MASS SPECTROMETRY [LARGE SCALE ANALYSIS]</scope>
</reference>
<comment type="function">
    <text evidence="1">High-affinity Fc receptor for immunoglobulin M (IgM), both secreted and membrane-bound IgM (By similarity). Primarily regulates IgM transport and homeostasis. In lymphoid cells, enables exocytosis of membrane-bound IgM on the plasma membrane as well as endocytosis of IgM-antigen complexes toward lysosomes for degradation. In mucosal epithelium, mediates retrotranscytosis of antigen-IgM complexes across mucosal M cells toward antigen-presenting cells in mucosal lymphoid tissues (By similarity). Triggers costimulatory signaling and mediates most of IgM effector functions involved in B cell development and primary immune response to infection. Likely limits tonic IgM BCR signaling to self-antigens for proper negative selection of autoreactive B cells in the bone marrow and for the maintenance of regulatory B cell pool in peripheral lymphoid organs. Mediates antibody responses to T cell-dependent and T cell-independent antigens and promotes induction of an efficient neutralizing IgG response. Engages in cross-talk with antigen-receptor signaling via the non-canonical NF-kappa-B, MAP kinases and calcium signaling pathways (By similarity).</text>
</comment>
<comment type="subunit">
    <text evidence="1">Interacts (via Ig-like domain) with IGHM (via CH4/Cmu4 domain), both secreted and membrane-bound IgM; the interaction is glycan-independent and multivalent theoretically involving up to eight binding sites for the IgM pentamer.</text>
</comment>
<comment type="subcellular location">
    <subcellularLocation>
        <location evidence="1">Cell membrane</location>
        <topology evidence="2">Single-pass membrane protein</topology>
    </subcellularLocation>
    <subcellularLocation>
        <location evidence="1">Early endosome membrane</location>
        <topology evidence="2">Single-pass membrane protein</topology>
    </subcellularLocation>
    <subcellularLocation>
        <location evidence="1">Golgi apparatus</location>
        <location evidence="1">trans-Golgi network membrane</location>
        <topology evidence="2">Single-pass membrane protein</topology>
    </subcellularLocation>
    <subcellularLocation>
        <location evidence="1">Lysosome membrane</location>
        <topology evidence="2">Single-pass membrane protein</topology>
    </subcellularLocation>
    <text evidence="1">Continuously recycles between cytoplasmic pool and the plasma membrane to bind as much IgM as possible.</text>
</comment>
<comment type="domain">
    <text evidence="1">The Ig-like V-set domain comprises three loops analogous to the complementarity-determining regions (CDR) of Ig variable domains, which are responsible for engaging IgM. Mediates multivalent interactions with the CH4 domains of pentameric IgM, facilitating receptor clustering and signaling.</text>
</comment>
<comment type="PTM">
    <text evidence="1">Phosphorylated on both Tyr and Ser residues.</text>
</comment>
<comment type="PTM">
    <text evidence="1">O-glycosylated. Sialylated. O-linked glycans regulate trafficking to the plasma membrane.</text>
</comment>
<dbReference type="EMBL" id="BC088197">
    <property type="protein sequence ID" value="AAH88197.1"/>
    <property type="molecule type" value="mRNA"/>
</dbReference>
<dbReference type="RefSeq" id="NP_001014843.1">
    <property type="nucleotide sequence ID" value="NM_001014843.2"/>
</dbReference>
<dbReference type="SMR" id="Q5M871"/>
<dbReference type="FunCoup" id="Q5M871">
    <property type="interactions" value="442"/>
</dbReference>
<dbReference type="STRING" id="10116.ENSRNOP00000036615"/>
<dbReference type="iPTMnet" id="Q5M871"/>
<dbReference type="PhosphoSitePlus" id="Q5M871"/>
<dbReference type="PaxDb" id="10116-ENSRNOP00000036615"/>
<dbReference type="GeneID" id="548326"/>
<dbReference type="KEGG" id="rno:548326"/>
<dbReference type="UCSC" id="RGD:1359282">
    <property type="organism name" value="rat"/>
</dbReference>
<dbReference type="AGR" id="RGD:1359282"/>
<dbReference type="CTD" id="9214"/>
<dbReference type="RGD" id="1359282">
    <property type="gene designation" value="Fcmr"/>
</dbReference>
<dbReference type="eggNOG" id="ENOG502S6XH">
    <property type="taxonomic scope" value="Eukaryota"/>
</dbReference>
<dbReference type="HOGENOM" id="CLU_059565_0_0_1"/>
<dbReference type="InParanoid" id="Q5M871"/>
<dbReference type="OrthoDB" id="88989at9989"/>
<dbReference type="PhylomeDB" id="Q5M871"/>
<dbReference type="TreeFam" id="TF338713"/>
<dbReference type="PRO" id="PR:Q5M871"/>
<dbReference type="Proteomes" id="UP000002494">
    <property type="component" value="Unplaced"/>
</dbReference>
<dbReference type="GO" id="GO:0009986">
    <property type="term" value="C:cell surface"/>
    <property type="evidence" value="ECO:0000266"/>
    <property type="project" value="RGD"/>
</dbReference>
<dbReference type="GO" id="GO:0031901">
    <property type="term" value="C:early endosome membrane"/>
    <property type="evidence" value="ECO:0000250"/>
    <property type="project" value="UniProtKB"/>
</dbReference>
<dbReference type="GO" id="GO:0009897">
    <property type="term" value="C:external side of plasma membrane"/>
    <property type="evidence" value="ECO:0000266"/>
    <property type="project" value="RGD"/>
</dbReference>
<dbReference type="GO" id="GO:0005765">
    <property type="term" value="C:lysosomal membrane"/>
    <property type="evidence" value="ECO:0000250"/>
    <property type="project" value="UniProtKB"/>
</dbReference>
<dbReference type="GO" id="GO:0005886">
    <property type="term" value="C:plasma membrane"/>
    <property type="evidence" value="ECO:0000250"/>
    <property type="project" value="UniProtKB"/>
</dbReference>
<dbReference type="GO" id="GO:0032588">
    <property type="term" value="C:trans-Golgi network membrane"/>
    <property type="evidence" value="ECO:0000250"/>
    <property type="project" value="UniProtKB"/>
</dbReference>
<dbReference type="GO" id="GO:0002172">
    <property type="term" value="F:high-affinity IgM receptor activity"/>
    <property type="evidence" value="ECO:0000250"/>
    <property type="project" value="UniProtKB"/>
</dbReference>
<dbReference type="GO" id="GO:0001791">
    <property type="term" value="F:IgM binding"/>
    <property type="evidence" value="ECO:0000250"/>
    <property type="project" value="UniProtKB"/>
</dbReference>
<dbReference type="GO" id="GO:0001790">
    <property type="term" value="F:polymeric immunoglobulin binding"/>
    <property type="evidence" value="ECO:0000250"/>
    <property type="project" value="UniProtKB"/>
</dbReference>
<dbReference type="GO" id="GO:0004888">
    <property type="term" value="F:transmembrane signaling receptor activity"/>
    <property type="evidence" value="ECO:0000318"/>
    <property type="project" value="GO_Central"/>
</dbReference>
<dbReference type="GO" id="GO:0160006">
    <property type="term" value="P:Fc receptor-mediated immune complex endocytosis"/>
    <property type="evidence" value="ECO:0000250"/>
    <property type="project" value="UniProtKB"/>
</dbReference>
<dbReference type="GO" id="GO:0002455">
    <property type="term" value="P:humoral immune response mediated by circulating immunoglobulin"/>
    <property type="evidence" value="ECO:0000250"/>
    <property type="project" value="UniProtKB"/>
</dbReference>
<dbReference type="GO" id="GO:0002414">
    <property type="term" value="P:immunoglobulin transcytosis in epithelial cells"/>
    <property type="evidence" value="ECO:0000250"/>
    <property type="project" value="UniProtKB"/>
</dbReference>
<dbReference type="GO" id="GO:2001237">
    <property type="term" value="P:negative regulation of extrinsic apoptotic signaling pathway"/>
    <property type="evidence" value="ECO:0000266"/>
    <property type="project" value="RGD"/>
</dbReference>
<dbReference type="GO" id="GO:0070229">
    <property type="term" value="P:negative regulation of lymphocyte apoptotic process"/>
    <property type="evidence" value="ECO:0000266"/>
    <property type="project" value="RGD"/>
</dbReference>
<dbReference type="GO" id="GO:0050855">
    <property type="term" value="P:regulation of B cell receptor signaling pathway"/>
    <property type="evidence" value="ECO:0000250"/>
    <property type="project" value="UniProtKB"/>
</dbReference>
<dbReference type="GO" id="GO:0007165">
    <property type="term" value="P:signal transduction"/>
    <property type="evidence" value="ECO:0000318"/>
    <property type="project" value="GO_Central"/>
</dbReference>
<dbReference type="CDD" id="cd05716">
    <property type="entry name" value="IgV_pIgR_like"/>
    <property type="match status" value="1"/>
</dbReference>
<dbReference type="Gene3D" id="2.60.40.10">
    <property type="entry name" value="Immunoglobulins"/>
    <property type="match status" value="1"/>
</dbReference>
<dbReference type="InterPro" id="IPR050671">
    <property type="entry name" value="CD300_family_receptors"/>
</dbReference>
<dbReference type="InterPro" id="IPR036179">
    <property type="entry name" value="Ig-like_dom_sf"/>
</dbReference>
<dbReference type="InterPro" id="IPR013783">
    <property type="entry name" value="Ig-like_fold"/>
</dbReference>
<dbReference type="InterPro" id="IPR003599">
    <property type="entry name" value="Ig_sub"/>
</dbReference>
<dbReference type="InterPro" id="IPR013106">
    <property type="entry name" value="Ig_V-set"/>
</dbReference>
<dbReference type="PANTHER" id="PTHR11860:SF59">
    <property type="entry name" value="FAS APOPTOTIC INHIBITORY MOLECULE 3"/>
    <property type="match status" value="1"/>
</dbReference>
<dbReference type="PANTHER" id="PTHR11860">
    <property type="entry name" value="POLYMERIC-IMMUNOGLOBULIN RECEPTOR"/>
    <property type="match status" value="1"/>
</dbReference>
<dbReference type="Pfam" id="PF07686">
    <property type="entry name" value="V-set"/>
    <property type="match status" value="1"/>
</dbReference>
<dbReference type="SMART" id="SM00409">
    <property type="entry name" value="IG"/>
    <property type="match status" value="1"/>
</dbReference>
<dbReference type="SUPFAM" id="SSF48726">
    <property type="entry name" value="Immunoglobulin"/>
    <property type="match status" value="1"/>
</dbReference>
<sequence length="426" mass="48055">MNLWLWLLYFLPVSGTLKVLPEVRLEVELGGSVFIECPLPQTHVRMYLCRQMTNPAICATVVSNIFVKKEYKRRVTLKPSLNKKLFLVEMTQLTKDDEGIYACGVGTNTDLGKTQKVTLNVRNEFPEYPEPFWDDEPTSEPSPRWWLHRYPEELPWLKMGEHASPSGFIDKVTTLSPKTEAPPVHQPSTNTSVSRHPRVYGASSETPTKPSALLPATTAFKTSARQASRLLEASYSHHTRLHGERTPHYGSQYGREDRGLHISIPEFHILIPTFLGFLLLVLLGLVVKRAIQRRRAFSRRVGRMARRMRGRGPSRQIPTQRRDAPQRPRSQNNVYSACPRRAREPDNVGSAEALLLNAPASAPPALPLVIETSWPHTPSLKMSCEYVSLGHQPAVNVEDQDSNDYINIPGLPHLPSKPPGPRPSRQ</sequence>